<dbReference type="EC" id="2.1.1.223" evidence="1"/>
<dbReference type="EMBL" id="AE016827">
    <property type="protein sequence ID" value="AAU36810.1"/>
    <property type="molecule type" value="Genomic_DNA"/>
</dbReference>
<dbReference type="SMR" id="Q65W50"/>
<dbReference type="STRING" id="221988.MS0203"/>
<dbReference type="KEGG" id="msu:MS0203"/>
<dbReference type="eggNOG" id="COG4123">
    <property type="taxonomic scope" value="Bacteria"/>
</dbReference>
<dbReference type="HOGENOM" id="CLU_061983_0_0_6"/>
<dbReference type="Proteomes" id="UP000000607">
    <property type="component" value="Chromosome"/>
</dbReference>
<dbReference type="GO" id="GO:0005737">
    <property type="term" value="C:cytoplasm"/>
    <property type="evidence" value="ECO:0007669"/>
    <property type="project" value="UniProtKB-SubCell"/>
</dbReference>
<dbReference type="GO" id="GO:0003676">
    <property type="term" value="F:nucleic acid binding"/>
    <property type="evidence" value="ECO:0007669"/>
    <property type="project" value="InterPro"/>
</dbReference>
<dbReference type="GO" id="GO:0016430">
    <property type="term" value="F:tRNA (adenine-N6)-methyltransferase activity"/>
    <property type="evidence" value="ECO:0007669"/>
    <property type="project" value="UniProtKB-UniRule"/>
</dbReference>
<dbReference type="GO" id="GO:0032259">
    <property type="term" value="P:methylation"/>
    <property type="evidence" value="ECO:0007669"/>
    <property type="project" value="UniProtKB-KW"/>
</dbReference>
<dbReference type="GO" id="GO:0008033">
    <property type="term" value="P:tRNA processing"/>
    <property type="evidence" value="ECO:0007669"/>
    <property type="project" value="UniProtKB-UniRule"/>
</dbReference>
<dbReference type="CDD" id="cd02440">
    <property type="entry name" value="AdoMet_MTases"/>
    <property type="match status" value="1"/>
</dbReference>
<dbReference type="Gene3D" id="3.40.50.150">
    <property type="entry name" value="Vaccinia Virus protein VP39"/>
    <property type="match status" value="1"/>
</dbReference>
<dbReference type="HAMAP" id="MF_01872">
    <property type="entry name" value="tRNA_methyltr_YfiC"/>
    <property type="match status" value="1"/>
</dbReference>
<dbReference type="InterPro" id="IPR002052">
    <property type="entry name" value="DNA_methylase_N6_adenine_CS"/>
</dbReference>
<dbReference type="InterPro" id="IPR025714">
    <property type="entry name" value="Methyltranfer_dom"/>
</dbReference>
<dbReference type="InterPro" id="IPR029063">
    <property type="entry name" value="SAM-dependent_MTases_sf"/>
</dbReference>
<dbReference type="InterPro" id="IPR050210">
    <property type="entry name" value="tRNA_Adenine-N(6)_MTase"/>
</dbReference>
<dbReference type="InterPro" id="IPR022882">
    <property type="entry name" value="tRNA_adenine-N6_MeTrfase"/>
</dbReference>
<dbReference type="PANTHER" id="PTHR47739">
    <property type="entry name" value="TRNA1(VAL) (ADENINE(37)-N6)-METHYLTRANSFERASE"/>
    <property type="match status" value="1"/>
</dbReference>
<dbReference type="PANTHER" id="PTHR47739:SF1">
    <property type="entry name" value="TRNA1(VAL) (ADENINE(37)-N6)-METHYLTRANSFERASE"/>
    <property type="match status" value="1"/>
</dbReference>
<dbReference type="Pfam" id="PF13847">
    <property type="entry name" value="Methyltransf_31"/>
    <property type="match status" value="1"/>
</dbReference>
<dbReference type="SUPFAM" id="SSF53335">
    <property type="entry name" value="S-adenosyl-L-methionine-dependent methyltransferases"/>
    <property type="match status" value="1"/>
</dbReference>
<dbReference type="PROSITE" id="PS00092">
    <property type="entry name" value="N6_MTASE"/>
    <property type="match status" value="1"/>
</dbReference>
<comment type="function">
    <text evidence="1">Specifically methylates the adenine in position 37 of tRNA(1)(Val) (anticodon cmo5UAC).</text>
</comment>
<comment type="catalytic activity">
    <reaction evidence="1">
        <text>adenosine(37) in tRNA1(Val) + S-adenosyl-L-methionine = N(6)-methyladenosine(37) in tRNA1(Val) + S-adenosyl-L-homocysteine + H(+)</text>
        <dbReference type="Rhea" id="RHEA:43160"/>
        <dbReference type="Rhea" id="RHEA-COMP:10369"/>
        <dbReference type="Rhea" id="RHEA-COMP:10370"/>
        <dbReference type="ChEBI" id="CHEBI:15378"/>
        <dbReference type="ChEBI" id="CHEBI:57856"/>
        <dbReference type="ChEBI" id="CHEBI:59789"/>
        <dbReference type="ChEBI" id="CHEBI:74411"/>
        <dbReference type="ChEBI" id="CHEBI:74449"/>
        <dbReference type="EC" id="2.1.1.223"/>
    </reaction>
</comment>
<comment type="subcellular location">
    <subcellularLocation>
        <location evidence="1">Cytoplasm</location>
    </subcellularLocation>
</comment>
<comment type="similarity">
    <text evidence="1">Belongs to the methyltransferase superfamily. tRNA (adenine-N(6)-)-methyltransferase family.</text>
</comment>
<protein>
    <recommendedName>
        <fullName evidence="1">tRNA1(Val) (adenine(37)-N6)-methyltransferase</fullName>
        <ecNumber evidence="1">2.1.1.223</ecNumber>
    </recommendedName>
    <alternativeName>
        <fullName evidence="1">tRNA m6A37 methyltransferase</fullName>
    </alternativeName>
</protein>
<sequence length="242" mass="27443">MTTFMNNKTKSAGFTFKQFHVSHDKCAMKVGTDGILLGAWASLQGNRYLDLGTGSGLIALMLAQRTQTDCHITGVEIDPSAYRQATENVRQSPWADKIQLEQQNIVDFTRTCTKKFDTVLSNPPYFEQGVDCRDKQRDTARYTQTLSHSDWLNLAADCLTNTGRIHLILPYAAGKNLQKQTALFCARCCEVITKSGKIPQRLLLTFSKQPCTTEQSRLVVYNEQNQYTEQFIALTRDFYLNF</sequence>
<organism>
    <name type="scientific">Mannheimia succiniciproducens (strain KCTC 0769BP / MBEL55E)</name>
    <dbReference type="NCBI Taxonomy" id="221988"/>
    <lineage>
        <taxon>Bacteria</taxon>
        <taxon>Pseudomonadati</taxon>
        <taxon>Pseudomonadota</taxon>
        <taxon>Gammaproteobacteria</taxon>
        <taxon>Pasteurellales</taxon>
        <taxon>Pasteurellaceae</taxon>
        <taxon>Basfia</taxon>
    </lineage>
</organism>
<reference key="1">
    <citation type="journal article" date="2004" name="Nat. Biotechnol.">
        <title>The genome sequence of the capnophilic rumen bacterium Mannheimia succiniciproducens.</title>
        <authorList>
            <person name="Hong S.H."/>
            <person name="Kim J.S."/>
            <person name="Lee S.Y."/>
            <person name="In Y.H."/>
            <person name="Choi S.S."/>
            <person name="Rih J.-K."/>
            <person name="Kim C.H."/>
            <person name="Jeong H."/>
            <person name="Hur C.G."/>
            <person name="Kim J.J."/>
        </authorList>
    </citation>
    <scope>NUCLEOTIDE SEQUENCE [LARGE SCALE GENOMIC DNA]</scope>
    <source>
        <strain>KCTC 0769BP / MBEL55E</strain>
    </source>
</reference>
<gene>
    <name type="ordered locus">MS0203</name>
</gene>
<name>TRMN6_MANSM</name>
<feature type="chain" id="PRO_0000387391" description="tRNA1(Val) (adenine(37)-N6)-methyltransferase">
    <location>
        <begin position="1"/>
        <end position="242"/>
    </location>
</feature>
<accession>Q65W50</accession>
<proteinExistence type="inferred from homology"/>
<keyword id="KW-0963">Cytoplasm</keyword>
<keyword id="KW-0489">Methyltransferase</keyword>
<keyword id="KW-0949">S-adenosyl-L-methionine</keyword>
<keyword id="KW-0808">Transferase</keyword>
<keyword id="KW-0819">tRNA processing</keyword>
<evidence type="ECO:0000255" key="1">
    <source>
        <dbReference type="HAMAP-Rule" id="MF_01872"/>
    </source>
</evidence>